<dbReference type="EC" id="1.1.3.37" evidence="3"/>
<dbReference type="EMBL" id="U40390">
    <property type="protein sequence ID" value="AAC98538.1"/>
    <property type="molecule type" value="Genomic_DNA"/>
</dbReference>
<dbReference type="EMBL" id="AB009401">
    <property type="protein sequence ID" value="BAA23804.1"/>
    <property type="molecule type" value="Genomic_DNA"/>
</dbReference>
<dbReference type="EMBL" id="Z46660">
    <property type="protein sequence ID" value="CAA86652.1"/>
    <property type="molecule type" value="Genomic_DNA"/>
</dbReference>
<dbReference type="EMBL" id="AY693120">
    <property type="protein sequence ID" value="AAT93139.1"/>
    <property type="molecule type" value="Genomic_DNA"/>
</dbReference>
<dbReference type="EMBL" id="BK006946">
    <property type="protein sequence ID" value="DAA09811.1"/>
    <property type="molecule type" value="Genomic_DNA"/>
</dbReference>
<dbReference type="PIR" id="S49641">
    <property type="entry name" value="S49641"/>
</dbReference>
<dbReference type="RefSeq" id="NP_013624.1">
    <property type="nucleotide sequence ID" value="NM_001182445.1"/>
</dbReference>
<dbReference type="SMR" id="P54783"/>
<dbReference type="BioGRID" id="35055">
    <property type="interactions" value="143"/>
</dbReference>
<dbReference type="FunCoup" id="P54783">
    <property type="interactions" value="120"/>
</dbReference>
<dbReference type="IntAct" id="P54783">
    <property type="interactions" value="40"/>
</dbReference>
<dbReference type="MINT" id="P54783"/>
<dbReference type="STRING" id="4932.YML086C"/>
<dbReference type="iPTMnet" id="P54783"/>
<dbReference type="PaxDb" id="4932-YML086C"/>
<dbReference type="PeptideAtlas" id="P54783"/>
<dbReference type="DNASU" id="854888"/>
<dbReference type="EnsemblFungi" id="YML086C_mRNA">
    <property type="protein sequence ID" value="YML086C"/>
    <property type="gene ID" value="YML086C"/>
</dbReference>
<dbReference type="GeneID" id="854888"/>
<dbReference type="KEGG" id="sce:YML086C"/>
<dbReference type="AGR" id="SGD:S000004551"/>
<dbReference type="SGD" id="S000004551">
    <property type="gene designation" value="ALO1"/>
</dbReference>
<dbReference type="VEuPathDB" id="FungiDB:YML086C"/>
<dbReference type="eggNOG" id="KOG4730">
    <property type="taxonomic scope" value="Eukaryota"/>
</dbReference>
<dbReference type="GeneTree" id="ENSGT00510000049722"/>
<dbReference type="HOGENOM" id="CLU_003896_4_1_1"/>
<dbReference type="InParanoid" id="P54783"/>
<dbReference type="OMA" id="YPRFGEF"/>
<dbReference type="OrthoDB" id="610608at2759"/>
<dbReference type="BioCyc" id="MetaCyc:YML086C-MONOMER"/>
<dbReference type="BioCyc" id="YEAST:YML086C-MONOMER"/>
<dbReference type="BRENDA" id="1.1.3.37">
    <property type="organism ID" value="984"/>
</dbReference>
<dbReference type="UniPathway" id="UPA00771">
    <property type="reaction ID" value="UER00766"/>
</dbReference>
<dbReference type="BioGRID-ORCS" id="854888">
    <property type="hits" value="1 hit in 10 CRISPR screens"/>
</dbReference>
<dbReference type="PRO" id="PR:P54783"/>
<dbReference type="Proteomes" id="UP000002311">
    <property type="component" value="Chromosome XIII"/>
</dbReference>
<dbReference type="RNAct" id="P54783">
    <property type="molecule type" value="protein"/>
</dbReference>
<dbReference type="GO" id="GO:0032473">
    <property type="term" value="C:cytoplasmic side of mitochondrial outer membrane"/>
    <property type="evidence" value="ECO:0000314"/>
    <property type="project" value="SGD"/>
</dbReference>
<dbReference type="GO" id="GO:0005741">
    <property type="term" value="C:mitochondrial outer membrane"/>
    <property type="evidence" value="ECO:0000314"/>
    <property type="project" value="SGD"/>
</dbReference>
<dbReference type="GO" id="GO:0005739">
    <property type="term" value="C:mitochondrion"/>
    <property type="evidence" value="ECO:0000314"/>
    <property type="project" value="SGD"/>
</dbReference>
<dbReference type="GO" id="GO:0003885">
    <property type="term" value="F:D-arabinono-1,4-lactone oxidase activity"/>
    <property type="evidence" value="ECO:0000314"/>
    <property type="project" value="SGD"/>
</dbReference>
<dbReference type="GO" id="GO:0071949">
    <property type="term" value="F:FAD binding"/>
    <property type="evidence" value="ECO:0007669"/>
    <property type="project" value="InterPro"/>
</dbReference>
<dbReference type="GO" id="GO:0031489">
    <property type="term" value="F:myosin V binding"/>
    <property type="evidence" value="ECO:0000353"/>
    <property type="project" value="SGD"/>
</dbReference>
<dbReference type="GO" id="GO:0034599">
    <property type="term" value="P:cellular response to oxidative stress"/>
    <property type="evidence" value="ECO:0000315"/>
    <property type="project" value="SGD"/>
</dbReference>
<dbReference type="GO" id="GO:0070485">
    <property type="term" value="P:dehydro-D-arabinono-1,4-lactone biosynthetic process"/>
    <property type="evidence" value="ECO:0000315"/>
    <property type="project" value="SGD"/>
</dbReference>
<dbReference type="GO" id="GO:0000001">
    <property type="term" value="P:mitochondrion inheritance"/>
    <property type="evidence" value="ECO:0000315"/>
    <property type="project" value="SGD"/>
</dbReference>
<dbReference type="FunFam" id="3.30.43.10:FF:000017">
    <property type="entry name" value="D-arabinono-1,4-lactone oxidase"/>
    <property type="match status" value="1"/>
</dbReference>
<dbReference type="FunFam" id="3.30.465.10:FF:000042">
    <property type="entry name" value="D-arabinono-1,4-lactone oxidase"/>
    <property type="match status" value="1"/>
</dbReference>
<dbReference type="Gene3D" id="3.30.465.10">
    <property type="match status" value="1"/>
</dbReference>
<dbReference type="Gene3D" id="3.30.70.2520">
    <property type="match status" value="1"/>
</dbReference>
<dbReference type="Gene3D" id="3.30.43.10">
    <property type="entry name" value="Uridine Diphospho-n-acetylenolpyruvylglucosamine Reductase, domain 2"/>
    <property type="match status" value="1"/>
</dbReference>
<dbReference type="InterPro" id="IPR007173">
    <property type="entry name" value="ALO_C"/>
</dbReference>
<dbReference type="InterPro" id="IPR016166">
    <property type="entry name" value="FAD-bd_PCMH"/>
</dbReference>
<dbReference type="InterPro" id="IPR036318">
    <property type="entry name" value="FAD-bd_PCMH-like_sf"/>
</dbReference>
<dbReference type="InterPro" id="IPR016167">
    <property type="entry name" value="FAD-bd_PCMH_sub1"/>
</dbReference>
<dbReference type="InterPro" id="IPR016169">
    <property type="entry name" value="FAD-bd_PCMH_sub2"/>
</dbReference>
<dbReference type="InterPro" id="IPR010031">
    <property type="entry name" value="FAD_lactone_oxidase-like"/>
</dbReference>
<dbReference type="InterPro" id="IPR006094">
    <property type="entry name" value="Oxid_FAD_bind_N"/>
</dbReference>
<dbReference type="InterPro" id="IPR006093">
    <property type="entry name" value="Oxy_OxRdtase_FAD_BS"/>
</dbReference>
<dbReference type="InterPro" id="IPR030654">
    <property type="entry name" value="Sugar_lactone_oxidase"/>
</dbReference>
<dbReference type="NCBIfam" id="TIGR01678">
    <property type="entry name" value="FAD_lactone_ox"/>
    <property type="match status" value="1"/>
</dbReference>
<dbReference type="PANTHER" id="PTHR43762:SF1">
    <property type="entry name" value="D-ARABINONO-1,4-LACTONE OXIDASE"/>
    <property type="match status" value="1"/>
</dbReference>
<dbReference type="PANTHER" id="PTHR43762">
    <property type="entry name" value="L-GULONOLACTONE OXIDASE"/>
    <property type="match status" value="1"/>
</dbReference>
<dbReference type="Pfam" id="PF04030">
    <property type="entry name" value="ALO"/>
    <property type="match status" value="1"/>
</dbReference>
<dbReference type="Pfam" id="PF01565">
    <property type="entry name" value="FAD_binding_4"/>
    <property type="match status" value="1"/>
</dbReference>
<dbReference type="PIRSF" id="PIRSF000136">
    <property type="entry name" value="LGO_GLO"/>
    <property type="match status" value="1"/>
</dbReference>
<dbReference type="SUPFAM" id="SSF56176">
    <property type="entry name" value="FAD-binding/transporter-associated domain-like"/>
    <property type="match status" value="1"/>
</dbReference>
<dbReference type="PROSITE" id="PS51387">
    <property type="entry name" value="FAD_PCMH"/>
    <property type="match status" value="1"/>
</dbReference>
<dbReference type="PROSITE" id="PS00862">
    <property type="entry name" value="OX2_COVAL_FAD"/>
    <property type="match status" value="1"/>
</dbReference>
<proteinExistence type="evidence at protein level"/>
<name>ALO_YEAST</name>
<reference key="1">
    <citation type="journal article" date="1998" name="Mol. Microbiol.">
        <title>D-erythroascorbic acid is an important antioxidant molecule in Saccharomyces cerevisiae.</title>
        <authorList>
            <person name="Huh W.-K."/>
            <person name="Lee B.-H."/>
            <person name="Kim S.-T."/>
            <person name="Kim Y.-R."/>
            <person name="Rhie G.-E."/>
            <person name="Baek Y.-W."/>
            <person name="Hwang C.-S."/>
            <person name="Lee J.-S."/>
            <person name="Kang S.-O."/>
        </authorList>
    </citation>
    <scope>NUCLEOTIDE SEQUENCE [GENOMIC DNA]</scope>
    <scope>PROTEIN SEQUENCE OF 86-105 AND 349-363</scope>
    <scope>CATALYTIC ACTIVITY</scope>
    <scope>SUBCELLULAR LOCATION</scope>
    <scope>SUBUNIT</scope>
    <source>
        <strain>ATCC 44774 / DBY747</strain>
    </source>
</reference>
<reference key="2">
    <citation type="submission" date="1997-12" db="EMBL/GenBank/DDBJ databases">
        <title>Identification of the yeast genomic sequence encoding L-galactono-gamma-lactone oxidase.</title>
        <authorList>
            <person name="Nishikimi M."/>
            <person name="Ohata Y."/>
            <person name="Ishikawa T."/>
        </authorList>
    </citation>
    <scope>NUCLEOTIDE SEQUENCE [GENOMIC DNA]</scope>
</reference>
<reference key="3">
    <citation type="journal article" date="1997" name="Nature">
        <title>The nucleotide sequence of Saccharomyces cerevisiae chromosome XIII.</title>
        <authorList>
            <person name="Bowman S."/>
            <person name="Churcher C.M."/>
            <person name="Badcock K."/>
            <person name="Brown D."/>
            <person name="Chillingworth T."/>
            <person name="Connor R."/>
            <person name="Dedman K."/>
            <person name="Devlin K."/>
            <person name="Gentles S."/>
            <person name="Hamlin N."/>
            <person name="Hunt S."/>
            <person name="Jagels K."/>
            <person name="Lye G."/>
            <person name="Moule S."/>
            <person name="Odell C."/>
            <person name="Pearson D."/>
            <person name="Rajandream M.A."/>
            <person name="Rice P."/>
            <person name="Skelton J."/>
            <person name="Walsh S.V."/>
            <person name="Whitehead S."/>
            <person name="Barrell B.G."/>
        </authorList>
    </citation>
    <scope>NUCLEOTIDE SEQUENCE [LARGE SCALE GENOMIC DNA]</scope>
    <source>
        <strain>ATCC 204508 / S288c</strain>
    </source>
</reference>
<reference key="4">
    <citation type="journal article" date="2014" name="G3 (Bethesda)">
        <title>The reference genome sequence of Saccharomyces cerevisiae: Then and now.</title>
        <authorList>
            <person name="Engel S.R."/>
            <person name="Dietrich F.S."/>
            <person name="Fisk D.G."/>
            <person name="Binkley G."/>
            <person name="Balakrishnan R."/>
            <person name="Costanzo M.C."/>
            <person name="Dwight S.S."/>
            <person name="Hitz B.C."/>
            <person name="Karra K."/>
            <person name="Nash R.S."/>
            <person name="Weng S."/>
            <person name="Wong E.D."/>
            <person name="Lloyd P."/>
            <person name="Skrzypek M.S."/>
            <person name="Miyasato S.R."/>
            <person name="Simison M."/>
            <person name="Cherry J.M."/>
        </authorList>
    </citation>
    <scope>GENOME REANNOTATION</scope>
    <source>
        <strain>ATCC 204508 / S288c</strain>
    </source>
</reference>
<reference key="5">
    <citation type="journal article" date="2007" name="Genome Res.">
        <title>Approaching a complete repository of sequence-verified protein-encoding clones for Saccharomyces cerevisiae.</title>
        <authorList>
            <person name="Hu Y."/>
            <person name="Rolfs A."/>
            <person name="Bhullar B."/>
            <person name="Murthy T.V.S."/>
            <person name="Zhu C."/>
            <person name="Berger M.F."/>
            <person name="Camargo A.A."/>
            <person name="Kelley F."/>
            <person name="McCarron S."/>
            <person name="Jepson D."/>
            <person name="Richardson A."/>
            <person name="Raphael J."/>
            <person name="Moreira D."/>
            <person name="Taycher E."/>
            <person name="Zuo D."/>
            <person name="Mohr S."/>
            <person name="Kane M.F."/>
            <person name="Williamson J."/>
            <person name="Simpson A.J.G."/>
            <person name="Bulyk M.L."/>
            <person name="Harlow E."/>
            <person name="Marsischky G."/>
            <person name="Kolodner R.D."/>
            <person name="LaBaer J."/>
        </authorList>
    </citation>
    <scope>NUCLEOTIDE SEQUENCE [GENOMIC DNA]</scope>
    <source>
        <strain>ATCC 204508 / S288c</strain>
    </source>
</reference>
<reference key="6">
    <citation type="journal article" date="2003" name="Nature">
        <title>Global analysis of protein expression in yeast.</title>
        <authorList>
            <person name="Ghaemmaghami S."/>
            <person name="Huh W.-K."/>
            <person name="Bower K."/>
            <person name="Howson R.W."/>
            <person name="Belle A."/>
            <person name="Dephoure N."/>
            <person name="O'Shea E.K."/>
            <person name="Weissman J.S."/>
        </authorList>
    </citation>
    <scope>LEVEL OF PROTEIN EXPRESSION [LARGE SCALE ANALYSIS]</scope>
</reference>
<protein>
    <recommendedName>
        <fullName>D-arabinono-1,4-lactone oxidase</fullName>
        <shortName>ALO</shortName>
        <ecNumber evidence="3">1.1.3.37</ecNumber>
    </recommendedName>
    <alternativeName>
        <fullName>L-galactono-gamma-lactone oxidase</fullName>
    </alternativeName>
</protein>
<keyword id="KW-0903">Direct protein sequencing</keyword>
<keyword id="KW-0274">FAD</keyword>
<keyword id="KW-0285">Flavoprotein</keyword>
<keyword id="KW-0472">Membrane</keyword>
<keyword id="KW-0496">Mitochondrion</keyword>
<keyword id="KW-0560">Oxidoreductase</keyword>
<keyword id="KW-1185">Reference proteome</keyword>
<sequence>MSTIPFRKNYVFKNWAGIYSAKPERYFQPSSIDEVVELVKSARLAEKSLVTVGSGHSPSNMCVTDEWLVNLDRLDKVQKFVEYPELHYADVTVDAGMRLYQLNEFLGAKGYSIQNLGSISEQSVAGIISTGSHGSSPYHGLISSQYVNLTIVNGKGELKFLDAENDPEVFKAALLSVGKIGIIVSATIRVVPGFNIKSTQEVITFENLLKQWDTLWTSSEFIRVWWYPYTRKCVLWRGNKTTDAQNGPAKSWWGTKLGRFFYETLLWISTKIYAPLTPFVEKFVFNRQYGKLEKSSTGDVNVTDSISGFNMDCLFSQFVDEWGCPMDNGLEVLRSLDHSIAQAAINKEFYVHVPMEVRCSNTTLPSEPLDTSKRTNTSPGPVYGNVCRPFLDNTPSHCRFAPLENVTNSQLTLYINATIYRPFGCNTPIHKWFTLFENTMMVAGGKPHWAKNFLGSTTLAAGPVKKDTDYDDFEMRGMALKVEEWYGEDLKKFRKIRKEQDPDNVFLANKQWAIINGIIDPSELSD</sequence>
<evidence type="ECO:0000250" key="1"/>
<evidence type="ECO:0000255" key="2">
    <source>
        <dbReference type="PROSITE-ProRule" id="PRU00718"/>
    </source>
</evidence>
<evidence type="ECO:0000269" key="3">
    <source>
    </source>
</evidence>
<evidence type="ECO:0000269" key="4">
    <source>
    </source>
</evidence>
<evidence type="ECO:0000305" key="5"/>
<evidence type="ECO:0000305" key="6">
    <source>
    </source>
</evidence>
<gene>
    <name type="primary">ALO1</name>
    <name type="ordered locus">YML086C</name>
</gene>
<organism>
    <name type="scientific">Saccharomyces cerevisiae (strain ATCC 204508 / S288c)</name>
    <name type="common">Baker's yeast</name>
    <dbReference type="NCBI Taxonomy" id="559292"/>
    <lineage>
        <taxon>Eukaryota</taxon>
        <taxon>Fungi</taxon>
        <taxon>Dikarya</taxon>
        <taxon>Ascomycota</taxon>
        <taxon>Saccharomycotina</taxon>
        <taxon>Saccharomycetes</taxon>
        <taxon>Saccharomycetales</taxon>
        <taxon>Saccharomycetaceae</taxon>
        <taxon>Saccharomyces</taxon>
    </lineage>
</organism>
<accession>P54783</accession>
<accession>D6W0J7</accession>
<accession>O42618</accession>
<feature type="chain" id="PRO_0000128171" description="D-arabinono-1,4-lactone oxidase">
    <location>
        <begin position="1"/>
        <end position="526"/>
    </location>
</feature>
<feature type="domain" description="FAD-binding PCMH-type" evidence="2">
    <location>
        <begin position="19"/>
        <end position="193"/>
    </location>
</feature>
<feature type="modified residue" description="Pros-8alpha-FAD histidine" evidence="1">
    <location>
        <position position="56"/>
    </location>
</feature>
<feature type="sequence conflict" description="In Ref. 2; BAA23804." evidence="5" ref="2">
    <original>A</original>
    <variation>P</variation>
    <location>
        <position position="417"/>
    </location>
</feature>
<comment type="function">
    <text evidence="3">Can oxidize L-gulono-1,4-lactone as well as D-arabinono-1,4-lactone and L-galactono-1,4-lactone.</text>
</comment>
<comment type="catalytic activity">
    <reaction evidence="3">
        <text>D-arabinono-1,4-lactone + O2 = dehydro-D-arabinono-1,4-lactone + H2O2 + H(+)</text>
        <dbReference type="Rhea" id="RHEA:23756"/>
        <dbReference type="ChEBI" id="CHEBI:15378"/>
        <dbReference type="ChEBI" id="CHEBI:15379"/>
        <dbReference type="ChEBI" id="CHEBI:16240"/>
        <dbReference type="ChEBI" id="CHEBI:16292"/>
        <dbReference type="ChEBI" id="CHEBI:58277"/>
        <dbReference type="EC" id="1.1.3.37"/>
    </reaction>
</comment>
<comment type="cofactor">
    <cofactor>
        <name>FAD</name>
        <dbReference type="ChEBI" id="CHEBI:57692"/>
    </cofactor>
</comment>
<comment type="pathway">
    <text evidence="6">Cofactor biosynthesis; D-erythroascorbate biosynthesis; dehydro-D-arabinono-1,4-lactone from D-arabinose: step 2/2.</text>
</comment>
<comment type="subunit">
    <text evidence="3">Monomer.</text>
</comment>
<comment type="subcellular location">
    <subcellularLocation>
        <location>Mitochondrion membrane</location>
    </subcellularLocation>
    <text>Membrane-embedded.</text>
</comment>
<comment type="PTM">
    <text>The N-terminus is blocked.</text>
</comment>
<comment type="miscellaneous">
    <text evidence="4">Present with 6190 molecules/cell in log phase SD medium.</text>
</comment>
<comment type="similarity">
    <text evidence="5">Belongs to the oxygen-dependent FAD-linked oxidoreductase family.</text>
</comment>